<protein>
    <recommendedName>
        <fullName>5-hydroxytryptamine receptor 1D</fullName>
        <shortName>5-HT-1D</shortName>
        <shortName>5-HT1D</shortName>
    </recommendedName>
    <alternativeName>
        <fullName>Serotonin receptor 1D</fullName>
    </alternativeName>
</protein>
<gene>
    <name type="primary">HTR1D</name>
</gene>
<reference key="1">
    <citation type="journal article" date="1997" name="J. Neurochem.">
        <title>Sequence and functional analysis of cloned guinea pig and rat serotonin 5-HT1D receptors: common pharmacological features within the 5-HT1D receptor subfamily.</title>
        <authorList>
            <person name="Wurch T."/>
            <person name="Palmier C."/>
            <person name="Colpaert F.C."/>
            <person name="Pauwels P.J."/>
        </authorList>
    </citation>
    <scope>NUCLEOTIDE SEQUENCE [GENOMIC DNA]</scope>
    <scope>FUNCTION</scope>
    <scope>SUBCELLULAR LOCATION</scope>
    <source>
        <strain>Hartley</strain>
        <tissue>Brain</tissue>
    </source>
</reference>
<reference key="2">
    <citation type="journal article" date="1997" name="Neuropharmacology">
        <title>Molecular cloning and pharmacological characterization of guinea pig 5-HT1B and 5-HT1D receptors.</title>
        <authorList>
            <person name="Zgombick J.M."/>
            <person name="Bard J.A."/>
            <person name="Kucharewicz S.A."/>
            <person name="Urquhart D.A."/>
            <person name="Weinshank R.L."/>
            <person name="Branchek T.A."/>
        </authorList>
    </citation>
    <scope>NUCLEOTIDE SEQUENCE [GENOMIC DNA]</scope>
    <scope>FUNCTION</scope>
    <scope>SUBCELLULAR LOCATION</scope>
    <source>
        <tissue>Liver</tissue>
    </source>
</reference>
<reference key="3">
    <citation type="journal article" date="2004" name="Eur. J. Pharmacol.">
        <title>The role of the 5-HT1D receptor as a presynaptic autoreceptor in the guinea pig.</title>
        <authorList>
            <person name="Pullar I.A."/>
            <person name="Boot J.R."/>
            <person name="Broadmore R.J."/>
            <person name="Eyre T.A."/>
            <person name="Cooper J."/>
            <person name="Sanger G.J."/>
            <person name="Wedley S."/>
            <person name="Mitchell S.N."/>
        </authorList>
    </citation>
    <scope>FUNCTION</scope>
    <scope>SUBCELLULAR LOCATION</scope>
</reference>
<dbReference type="EMBL" id="X94436">
    <property type="protein sequence ID" value="CAA64210.1"/>
    <property type="molecule type" value="Genomic_DNA"/>
</dbReference>
<dbReference type="EMBL" id="U82174">
    <property type="protein sequence ID" value="AAB58499.1"/>
    <property type="molecule type" value="Genomic_DNA"/>
</dbReference>
<dbReference type="RefSeq" id="NP_001166889.1">
    <property type="nucleotide sequence ID" value="NM_001173418.1"/>
</dbReference>
<dbReference type="RefSeq" id="XP_013009218.1">
    <property type="nucleotide sequence ID" value="XM_013153764.1"/>
</dbReference>
<dbReference type="SMR" id="Q60484"/>
<dbReference type="FunCoup" id="Q60484">
    <property type="interactions" value="626"/>
</dbReference>
<dbReference type="STRING" id="10141.ENSCPOP00000024447"/>
<dbReference type="BindingDB" id="Q60484"/>
<dbReference type="ChEMBL" id="CHEMBL2304407"/>
<dbReference type="GlyCosmos" id="Q60484">
    <property type="glycosylation" value="3 sites, No reported glycans"/>
</dbReference>
<dbReference type="GeneID" id="100379622"/>
<dbReference type="KEGG" id="cpoc:100379622"/>
<dbReference type="CTD" id="3352"/>
<dbReference type="eggNOG" id="KOG3656">
    <property type="taxonomic scope" value="Eukaryota"/>
</dbReference>
<dbReference type="HOGENOM" id="CLU_009579_11_1_1"/>
<dbReference type="InParanoid" id="Q60484"/>
<dbReference type="OrthoDB" id="5956310at2759"/>
<dbReference type="TreeFam" id="TF316350"/>
<dbReference type="PRO" id="PR:Q60484"/>
<dbReference type="Proteomes" id="UP000005447">
    <property type="component" value="Unassembled WGS sequence"/>
</dbReference>
<dbReference type="GO" id="GO:0005886">
    <property type="term" value="C:plasma membrane"/>
    <property type="evidence" value="ECO:0000250"/>
    <property type="project" value="UniProtKB"/>
</dbReference>
<dbReference type="GO" id="GO:0045202">
    <property type="term" value="C:synapse"/>
    <property type="evidence" value="ECO:0007669"/>
    <property type="project" value="GOC"/>
</dbReference>
<dbReference type="GO" id="GO:0004993">
    <property type="term" value="F:G protein-coupled serotonin receptor activity"/>
    <property type="evidence" value="ECO:0000250"/>
    <property type="project" value="UniProtKB"/>
</dbReference>
<dbReference type="GO" id="GO:0071880">
    <property type="term" value="P:adenylate cyclase-activating adrenergic receptor signaling pathway"/>
    <property type="evidence" value="ECO:0007669"/>
    <property type="project" value="TreeGrafter"/>
</dbReference>
<dbReference type="GO" id="GO:0007193">
    <property type="term" value="P:adenylate cyclase-inhibiting G protein-coupled receptor signaling pathway"/>
    <property type="evidence" value="ECO:0000250"/>
    <property type="project" value="UniProtKB"/>
</dbReference>
<dbReference type="GO" id="GO:0007268">
    <property type="term" value="P:chemical synaptic transmission"/>
    <property type="evidence" value="ECO:0007669"/>
    <property type="project" value="InterPro"/>
</dbReference>
<dbReference type="GO" id="GO:0043410">
    <property type="term" value="P:positive regulation of MAPK cascade"/>
    <property type="evidence" value="ECO:0007669"/>
    <property type="project" value="TreeGrafter"/>
</dbReference>
<dbReference type="GO" id="GO:0050795">
    <property type="term" value="P:regulation of behavior"/>
    <property type="evidence" value="ECO:0007669"/>
    <property type="project" value="InterPro"/>
</dbReference>
<dbReference type="GO" id="GO:0040012">
    <property type="term" value="P:regulation of locomotion"/>
    <property type="evidence" value="ECO:0007669"/>
    <property type="project" value="InterPro"/>
</dbReference>
<dbReference type="GO" id="GO:0006939">
    <property type="term" value="P:smooth muscle contraction"/>
    <property type="evidence" value="ECO:0007669"/>
    <property type="project" value="InterPro"/>
</dbReference>
<dbReference type="GO" id="GO:0042310">
    <property type="term" value="P:vasoconstriction"/>
    <property type="evidence" value="ECO:0007669"/>
    <property type="project" value="InterPro"/>
</dbReference>
<dbReference type="CDD" id="cd15333">
    <property type="entry name" value="7tmA_5-HT1B_1D"/>
    <property type="match status" value="1"/>
</dbReference>
<dbReference type="Gene3D" id="1.20.1070.10">
    <property type="entry name" value="Rhodopsin 7-helix transmembrane proteins"/>
    <property type="match status" value="1"/>
</dbReference>
<dbReference type="InterPro" id="IPR000505">
    <property type="entry name" value="5HT1D_rcpt"/>
</dbReference>
<dbReference type="InterPro" id="IPR002231">
    <property type="entry name" value="5HT_rcpt"/>
</dbReference>
<dbReference type="InterPro" id="IPR000276">
    <property type="entry name" value="GPCR_Rhodpsn"/>
</dbReference>
<dbReference type="InterPro" id="IPR017452">
    <property type="entry name" value="GPCR_Rhodpsn_7TM"/>
</dbReference>
<dbReference type="PANTHER" id="PTHR24248:SF196">
    <property type="entry name" value="5-HYDROXYTRYPTAMINE RECEPTOR 1D"/>
    <property type="match status" value="1"/>
</dbReference>
<dbReference type="PANTHER" id="PTHR24248">
    <property type="entry name" value="ADRENERGIC RECEPTOR-RELATED G-PROTEIN COUPLED RECEPTOR"/>
    <property type="match status" value="1"/>
</dbReference>
<dbReference type="Pfam" id="PF00001">
    <property type="entry name" value="7tm_1"/>
    <property type="match status" value="1"/>
</dbReference>
<dbReference type="PRINTS" id="PR00514">
    <property type="entry name" value="5HT1DRECEPTR"/>
</dbReference>
<dbReference type="PRINTS" id="PR01101">
    <property type="entry name" value="5HTRECEPTOR"/>
</dbReference>
<dbReference type="PRINTS" id="PR00237">
    <property type="entry name" value="GPCRRHODOPSN"/>
</dbReference>
<dbReference type="SMART" id="SM01381">
    <property type="entry name" value="7TM_GPCR_Srsx"/>
    <property type="match status" value="1"/>
</dbReference>
<dbReference type="SUPFAM" id="SSF81321">
    <property type="entry name" value="Family A G protein-coupled receptor-like"/>
    <property type="match status" value="1"/>
</dbReference>
<dbReference type="PROSITE" id="PS00237">
    <property type="entry name" value="G_PROTEIN_RECEP_F1_1"/>
    <property type="match status" value="1"/>
</dbReference>
<dbReference type="PROSITE" id="PS50262">
    <property type="entry name" value="G_PROTEIN_RECEP_F1_2"/>
    <property type="match status" value="1"/>
</dbReference>
<keyword id="KW-1003">Cell membrane</keyword>
<keyword id="KW-1015">Disulfide bond</keyword>
<keyword id="KW-0297">G-protein coupled receptor</keyword>
<keyword id="KW-0325">Glycoprotein</keyword>
<keyword id="KW-0472">Membrane</keyword>
<keyword id="KW-0675">Receptor</keyword>
<keyword id="KW-1185">Reference proteome</keyword>
<keyword id="KW-0807">Transducer</keyword>
<keyword id="KW-0812">Transmembrane</keyword>
<keyword id="KW-1133">Transmembrane helix</keyword>
<feature type="chain" id="PRO_0000068926" description="5-hydroxytryptamine receptor 1D">
    <location>
        <begin position="1"/>
        <end position="376"/>
    </location>
</feature>
<feature type="transmembrane region" description="Helical; Name=1" evidence="1">
    <location>
        <begin position="39"/>
        <end position="64"/>
    </location>
</feature>
<feature type="transmembrane region" description="Helical; Name=2" evidence="1">
    <location>
        <begin position="76"/>
        <end position="97"/>
    </location>
</feature>
<feature type="transmembrane region" description="Helical; Name=3" evidence="1">
    <location>
        <begin position="110"/>
        <end position="134"/>
    </location>
</feature>
<feature type="transmembrane region" description="Helical; Name=4" evidence="1">
    <location>
        <begin position="155"/>
        <end position="176"/>
    </location>
</feature>
<feature type="transmembrane region" description="Helical; Name=5" evidence="1">
    <location>
        <begin position="195"/>
        <end position="218"/>
    </location>
</feature>
<feature type="transmembrane region" description="Helical; Name=6" evidence="1">
    <location>
        <begin position="300"/>
        <end position="325"/>
    </location>
</feature>
<feature type="transmembrane region" description="Helical; Name=7" evidence="1">
    <location>
        <begin position="335"/>
        <end position="358"/>
    </location>
</feature>
<feature type="region of interest" description="Disordered" evidence="6">
    <location>
        <begin position="1"/>
        <end position="22"/>
    </location>
</feature>
<feature type="short sequence motif" description="DRY motif; important for ligand-induced conformation changes" evidence="2">
    <location>
        <begin position="135"/>
        <end position="137"/>
    </location>
</feature>
<feature type="short sequence motif" description="NPxxY motif; important for ligand-induced conformation changes and signaling" evidence="2">
    <location>
        <begin position="351"/>
        <end position="355"/>
    </location>
</feature>
<feature type="binding site" evidence="1">
    <location>
        <position position="118"/>
    </location>
    <ligand>
        <name>serotonin</name>
        <dbReference type="ChEBI" id="CHEBI:350546"/>
    </ligand>
</feature>
<feature type="binding site" evidence="1">
    <location>
        <position position="122"/>
    </location>
    <ligand>
        <name>serotonin</name>
        <dbReference type="ChEBI" id="CHEBI:350546"/>
    </ligand>
</feature>
<feature type="binding site" evidence="1">
    <location>
        <position position="320"/>
    </location>
    <ligand>
        <name>serotonin</name>
        <dbReference type="ChEBI" id="CHEBI:350546"/>
    </ligand>
</feature>
<feature type="glycosylation site" description="N-linked (GlcNAc...) asparagine" evidence="4">
    <location>
        <position position="5"/>
    </location>
</feature>
<feature type="glycosylation site" description="N-linked (GlcNAc...) asparagine" evidence="4">
    <location>
        <position position="17"/>
    </location>
</feature>
<feature type="glycosylation site" description="N-linked (GlcNAc...) asparagine" evidence="4">
    <location>
        <position position="21"/>
    </location>
</feature>
<feature type="disulfide bond" evidence="5">
    <location>
        <begin position="111"/>
        <end position="188"/>
    </location>
</feature>
<feature type="sequence conflict" description="In Ref. 2; AAB58499." evidence="10" ref="2">
    <original>R</original>
    <variation>A</variation>
    <location>
        <position position="222"/>
    </location>
</feature>
<proteinExistence type="inferred from homology"/>
<comment type="function">
    <text evidence="1 3">G-protein coupled receptor for 5-hydroxytryptamine (serotonin) (By similarity). Also functions as a receptor for ergot alkaloid derivatives, various anxiolytic and antidepressant drugs and other psychoactive substances. Ligand binding causes a conformation change that triggers signaling via guanine nucleotide-binding proteins (G proteins) and modulates the activity of downstream effectors, such as adenylate cyclase. HTR1D is coupled to G(i)/G(o) G alpha proteins and mediates inhibitory neurotransmission by inhibiting adenylate cyclase activity. Regulates the release of 5-hydroxytryptamine in the brain, and thereby affects neural activity. May also play a role in regulating the release of other neurotransmitters. May play a role in vasoconstriction (By similarity).</text>
</comment>
<comment type="subunit">
    <text evidence="1">Homodimer. Heterodimer with HTR1B.</text>
</comment>
<comment type="subcellular location">
    <subcellularLocation>
        <location evidence="7 8 9">Cell membrane</location>
        <topology evidence="1">Multi-pass membrane protein</topology>
    </subcellularLocation>
</comment>
<comment type="similarity">
    <text evidence="5">Belongs to the G-protein coupled receptor 1 family.</text>
</comment>
<accession>Q60484</accession>
<accession>O08891</accession>
<evidence type="ECO:0000250" key="1">
    <source>
        <dbReference type="UniProtKB" id="P28221"/>
    </source>
</evidence>
<evidence type="ECO:0000250" key="2">
    <source>
        <dbReference type="UniProtKB" id="P41595"/>
    </source>
</evidence>
<evidence type="ECO:0000250" key="3">
    <source>
        <dbReference type="UniProtKB" id="P49145"/>
    </source>
</evidence>
<evidence type="ECO:0000255" key="4"/>
<evidence type="ECO:0000255" key="5">
    <source>
        <dbReference type="PROSITE-ProRule" id="PRU00521"/>
    </source>
</evidence>
<evidence type="ECO:0000256" key="6">
    <source>
        <dbReference type="SAM" id="MobiDB-lite"/>
    </source>
</evidence>
<evidence type="ECO:0000269" key="7">
    <source>
    </source>
</evidence>
<evidence type="ECO:0000269" key="8">
    <source>
    </source>
</evidence>
<evidence type="ECO:0000269" key="9">
    <source>
    </source>
</evidence>
<evidence type="ECO:0000305" key="10"/>
<organism>
    <name type="scientific">Cavia porcellus</name>
    <name type="common">Guinea pig</name>
    <dbReference type="NCBI Taxonomy" id="10141"/>
    <lineage>
        <taxon>Eukaryota</taxon>
        <taxon>Metazoa</taxon>
        <taxon>Chordata</taxon>
        <taxon>Craniata</taxon>
        <taxon>Vertebrata</taxon>
        <taxon>Euteleostomi</taxon>
        <taxon>Mammalia</taxon>
        <taxon>Eutheria</taxon>
        <taxon>Euarchontoglires</taxon>
        <taxon>Glires</taxon>
        <taxon>Rodentia</taxon>
        <taxon>Hystricomorpha</taxon>
        <taxon>Caviidae</taxon>
        <taxon>Cavia</taxon>
    </lineage>
</organism>
<sequence>MSPPNQSEEGLPQEASNRSLNATETPGDWDPGLLQALKVSLVVVLSIITLATVLSNAFVLTTILLTRKLHTPANYLIGSLATTDLLVSILVMPISIAYTTTRTWNFGQILCDIWVSSDITCCTASILHLCVIALDRYWAITDALEYSKRRTAGHAGAMIAAVWVISICISIPPLFWRQAQAQEEMSDCLVNTSQISYTIYSTCGAFYIPSVLLIILYSRIYRAARSRILNPPSLSGKRFTTAHLITGSAGSSLCSLNPSLHEGHMHPGSPLFFNHVRIKLADSVLERKRISAARERKATKTLGIILGAFIVCWLPFFVVSLVLPICRDSCWIHPALFDFFTWLGYLNSLINPIIYTVFNEDFRQAFQKVVHFRKAS</sequence>
<name>5HT1D_CAVPO</name>